<sequence>MNFRPLHDRVVVKRIDAEEKTAGGIIIPDTAKEKPSQGEIVAVGPGGRDEAGKLIPIDLKVGDRVLFGKWSGTEVKIDGKELLIMKESDIMGVITDVGAKKKAA</sequence>
<dbReference type="EMBL" id="BX572599">
    <property type="protein sequence ID" value="CAE27606.1"/>
    <property type="molecule type" value="Genomic_DNA"/>
</dbReference>
<dbReference type="RefSeq" id="WP_011157720.1">
    <property type="nucleotide sequence ID" value="NZ_CP116810.1"/>
</dbReference>
<dbReference type="SMR" id="P60367"/>
<dbReference type="STRING" id="258594.RPA2165"/>
<dbReference type="GeneID" id="66893215"/>
<dbReference type="eggNOG" id="COG0234">
    <property type="taxonomic scope" value="Bacteria"/>
</dbReference>
<dbReference type="HOGENOM" id="CLU_132825_1_0_5"/>
<dbReference type="PhylomeDB" id="P60367"/>
<dbReference type="GO" id="GO:0005737">
    <property type="term" value="C:cytoplasm"/>
    <property type="evidence" value="ECO:0007669"/>
    <property type="project" value="UniProtKB-SubCell"/>
</dbReference>
<dbReference type="GO" id="GO:0005524">
    <property type="term" value="F:ATP binding"/>
    <property type="evidence" value="ECO:0007669"/>
    <property type="project" value="InterPro"/>
</dbReference>
<dbReference type="GO" id="GO:0046872">
    <property type="term" value="F:metal ion binding"/>
    <property type="evidence" value="ECO:0007669"/>
    <property type="project" value="TreeGrafter"/>
</dbReference>
<dbReference type="GO" id="GO:0044183">
    <property type="term" value="F:protein folding chaperone"/>
    <property type="evidence" value="ECO:0007669"/>
    <property type="project" value="InterPro"/>
</dbReference>
<dbReference type="GO" id="GO:0051087">
    <property type="term" value="F:protein-folding chaperone binding"/>
    <property type="evidence" value="ECO:0007669"/>
    <property type="project" value="TreeGrafter"/>
</dbReference>
<dbReference type="GO" id="GO:0051082">
    <property type="term" value="F:unfolded protein binding"/>
    <property type="evidence" value="ECO:0007669"/>
    <property type="project" value="TreeGrafter"/>
</dbReference>
<dbReference type="GO" id="GO:0051085">
    <property type="term" value="P:chaperone cofactor-dependent protein refolding"/>
    <property type="evidence" value="ECO:0007669"/>
    <property type="project" value="TreeGrafter"/>
</dbReference>
<dbReference type="CDD" id="cd00320">
    <property type="entry name" value="cpn10"/>
    <property type="match status" value="1"/>
</dbReference>
<dbReference type="FunFam" id="2.30.33.40:FF:000001">
    <property type="entry name" value="10 kDa chaperonin"/>
    <property type="match status" value="1"/>
</dbReference>
<dbReference type="Gene3D" id="2.30.33.40">
    <property type="entry name" value="GroES chaperonin"/>
    <property type="match status" value="1"/>
</dbReference>
<dbReference type="HAMAP" id="MF_00580">
    <property type="entry name" value="CH10"/>
    <property type="match status" value="1"/>
</dbReference>
<dbReference type="InterPro" id="IPR020818">
    <property type="entry name" value="Chaperonin_GroES"/>
</dbReference>
<dbReference type="InterPro" id="IPR037124">
    <property type="entry name" value="Chaperonin_GroES_sf"/>
</dbReference>
<dbReference type="InterPro" id="IPR018369">
    <property type="entry name" value="Chaprnonin_Cpn10_CS"/>
</dbReference>
<dbReference type="InterPro" id="IPR011032">
    <property type="entry name" value="GroES-like_sf"/>
</dbReference>
<dbReference type="NCBIfam" id="NF001527">
    <property type="entry name" value="PRK00364.1-2"/>
    <property type="match status" value="1"/>
</dbReference>
<dbReference type="NCBIfam" id="NF001529">
    <property type="entry name" value="PRK00364.1-5"/>
    <property type="match status" value="1"/>
</dbReference>
<dbReference type="NCBIfam" id="NF001531">
    <property type="entry name" value="PRK00364.2-2"/>
    <property type="match status" value="1"/>
</dbReference>
<dbReference type="NCBIfam" id="NF001533">
    <property type="entry name" value="PRK00364.2-4"/>
    <property type="match status" value="1"/>
</dbReference>
<dbReference type="NCBIfam" id="NF001534">
    <property type="entry name" value="PRK00364.2-5"/>
    <property type="match status" value="1"/>
</dbReference>
<dbReference type="PANTHER" id="PTHR10772">
    <property type="entry name" value="10 KDA HEAT SHOCK PROTEIN"/>
    <property type="match status" value="1"/>
</dbReference>
<dbReference type="PANTHER" id="PTHR10772:SF58">
    <property type="entry name" value="CO-CHAPERONIN GROES"/>
    <property type="match status" value="1"/>
</dbReference>
<dbReference type="Pfam" id="PF00166">
    <property type="entry name" value="Cpn10"/>
    <property type="match status" value="1"/>
</dbReference>
<dbReference type="PRINTS" id="PR00297">
    <property type="entry name" value="CHAPERONIN10"/>
</dbReference>
<dbReference type="SMART" id="SM00883">
    <property type="entry name" value="Cpn10"/>
    <property type="match status" value="1"/>
</dbReference>
<dbReference type="SUPFAM" id="SSF50129">
    <property type="entry name" value="GroES-like"/>
    <property type="match status" value="1"/>
</dbReference>
<dbReference type="PROSITE" id="PS00681">
    <property type="entry name" value="CHAPERONINS_CPN10"/>
    <property type="match status" value="1"/>
</dbReference>
<gene>
    <name evidence="1" type="primary">groES2</name>
    <name evidence="1" type="synonym">groS2</name>
    <name type="ordered locus">RPA2165</name>
</gene>
<feature type="chain" id="PRO_0000174826" description="Co-chaperonin GroES 2">
    <location>
        <begin position="1"/>
        <end position="104"/>
    </location>
</feature>
<reference key="1">
    <citation type="journal article" date="2004" name="Nat. Biotechnol.">
        <title>Complete genome sequence of the metabolically versatile photosynthetic bacterium Rhodopseudomonas palustris.</title>
        <authorList>
            <person name="Larimer F.W."/>
            <person name="Chain P."/>
            <person name="Hauser L."/>
            <person name="Lamerdin J.E."/>
            <person name="Malfatti S."/>
            <person name="Do L."/>
            <person name="Land M.L."/>
            <person name="Pelletier D.A."/>
            <person name="Beatty J.T."/>
            <person name="Lang A.S."/>
            <person name="Tabita F.R."/>
            <person name="Gibson J.L."/>
            <person name="Hanson T.E."/>
            <person name="Bobst C."/>
            <person name="Torres y Torres J.L."/>
            <person name="Peres C."/>
            <person name="Harrison F.H."/>
            <person name="Gibson J."/>
            <person name="Harwood C.S."/>
        </authorList>
    </citation>
    <scope>NUCLEOTIDE SEQUENCE [LARGE SCALE GENOMIC DNA]</scope>
    <source>
        <strain>ATCC BAA-98 / CGA009</strain>
    </source>
</reference>
<organism>
    <name type="scientific">Rhodopseudomonas palustris (strain ATCC BAA-98 / CGA009)</name>
    <dbReference type="NCBI Taxonomy" id="258594"/>
    <lineage>
        <taxon>Bacteria</taxon>
        <taxon>Pseudomonadati</taxon>
        <taxon>Pseudomonadota</taxon>
        <taxon>Alphaproteobacteria</taxon>
        <taxon>Hyphomicrobiales</taxon>
        <taxon>Nitrobacteraceae</taxon>
        <taxon>Rhodopseudomonas</taxon>
    </lineage>
</organism>
<accession>P60367</accession>
<proteinExistence type="inferred from homology"/>
<name>CH102_RHOPA</name>
<keyword id="KW-0143">Chaperone</keyword>
<keyword id="KW-0963">Cytoplasm</keyword>
<evidence type="ECO:0000255" key="1">
    <source>
        <dbReference type="HAMAP-Rule" id="MF_00580"/>
    </source>
</evidence>
<evidence type="ECO:0000305" key="2"/>
<protein>
    <recommendedName>
        <fullName evidence="1">Co-chaperonin GroES 2</fullName>
    </recommendedName>
    <alternativeName>
        <fullName evidence="1">10 kDa chaperonin 2</fullName>
    </alternativeName>
    <alternativeName>
        <fullName evidence="1">Chaperonin-10 2</fullName>
        <shortName evidence="1">Cpn10 2</shortName>
    </alternativeName>
</protein>
<comment type="function">
    <text evidence="1">Together with the chaperonin GroEL, plays an essential role in assisting protein folding. The GroEL-GroES system forms a nano-cage that allows encapsulation of the non-native substrate proteins and provides a physical environment optimized to promote and accelerate protein folding. GroES binds to the apical surface of the GroEL ring, thereby capping the opening of the GroEL channel.</text>
</comment>
<comment type="subunit">
    <text evidence="1">Heptamer of 7 subunits arranged in a ring. Interacts with the chaperonin GroEL.</text>
</comment>
<comment type="subcellular location">
    <subcellularLocation>
        <location evidence="1">Cytoplasm</location>
    </subcellularLocation>
</comment>
<comment type="similarity">
    <text evidence="1 2">Belongs to the GroES chaperonin family.</text>
</comment>